<reference key="1">
    <citation type="journal article" date="2006" name="J. Bacteriol.">
        <title>Comparative genomic evidence for a close relationship between the dimorphic prosthecate bacteria Hyphomonas neptunium and Caulobacter crescentus.</title>
        <authorList>
            <person name="Badger J.H."/>
            <person name="Hoover T.R."/>
            <person name="Brun Y.V."/>
            <person name="Weiner R.M."/>
            <person name="Laub M.T."/>
            <person name="Alexandre G."/>
            <person name="Mrazek J."/>
            <person name="Ren Q."/>
            <person name="Paulsen I.T."/>
            <person name="Nelson K.E."/>
            <person name="Khouri H.M."/>
            <person name="Radune D."/>
            <person name="Sosa J."/>
            <person name="Dodson R.J."/>
            <person name="Sullivan S.A."/>
            <person name="Rosovitz M.J."/>
            <person name="Madupu R."/>
            <person name="Brinkac L.M."/>
            <person name="Durkin A.S."/>
            <person name="Daugherty S.C."/>
            <person name="Kothari S.P."/>
            <person name="Giglio M.G."/>
            <person name="Zhou L."/>
            <person name="Haft D.H."/>
            <person name="Selengut J.D."/>
            <person name="Davidsen T.M."/>
            <person name="Yang Q."/>
            <person name="Zafar N."/>
            <person name="Ward N.L."/>
        </authorList>
    </citation>
    <scope>NUCLEOTIDE SEQUENCE [LARGE SCALE GENOMIC DNA]</scope>
    <source>
        <strain>ATCC 15444</strain>
    </source>
</reference>
<sequence length="441" mass="46760">MAARDTICALASGPPPSAIAIIRISGPAVAEIGKSLLASGLPEPKRAALTYIYDSDGALIDQGIALYANAPHSYTGEDTLELYLHGGPAVIDHALRGLTAIAGVRLAEPGEFTRRAFENGKLDLTEAEGVADIIEAETGAQKAQALRQLGGGLTEIYDGWREELTGTLALIEVMIDFPDEGDVPEDTARPILSRLEKIMSEIETALGDRGVGERIRDGFRVAIVGPPNAGKSSILNRLARREAAIVTDIAGTTRDVVEVRLVLGGQVVWIADTAGLRETEDVVEAEGVRRARRAAAEADLRIHVIDGTDPSPPPEQVETQDIIVFNKADQRPAILAPDGALPISVITGEGIDKLESWIAAFVSRRASSVEAPVITRARHREKLVAGLASLTAARDALVSDMGAELAGEDVRMALRQLSSVIGRVDVEDVLGAVFSKFCIGK</sequence>
<feature type="chain" id="PRO_0000345801" description="tRNA modification GTPase MnmE">
    <location>
        <begin position="1"/>
        <end position="441"/>
    </location>
</feature>
<feature type="domain" description="TrmE-type G">
    <location>
        <begin position="218"/>
        <end position="363"/>
    </location>
</feature>
<feature type="binding site" evidence="1">
    <location>
        <position position="23"/>
    </location>
    <ligand>
        <name>(6S)-5-formyl-5,6,7,8-tetrahydrofolate</name>
        <dbReference type="ChEBI" id="CHEBI:57457"/>
    </ligand>
</feature>
<feature type="binding site" evidence="1">
    <location>
        <position position="81"/>
    </location>
    <ligand>
        <name>(6S)-5-formyl-5,6,7,8-tetrahydrofolate</name>
        <dbReference type="ChEBI" id="CHEBI:57457"/>
    </ligand>
</feature>
<feature type="binding site" evidence="1">
    <location>
        <position position="121"/>
    </location>
    <ligand>
        <name>(6S)-5-formyl-5,6,7,8-tetrahydrofolate</name>
        <dbReference type="ChEBI" id="CHEBI:57457"/>
    </ligand>
</feature>
<feature type="binding site" evidence="1">
    <location>
        <begin position="228"/>
        <end position="233"/>
    </location>
    <ligand>
        <name>GTP</name>
        <dbReference type="ChEBI" id="CHEBI:37565"/>
    </ligand>
</feature>
<feature type="binding site" evidence="1">
    <location>
        <position position="228"/>
    </location>
    <ligand>
        <name>K(+)</name>
        <dbReference type="ChEBI" id="CHEBI:29103"/>
    </ligand>
</feature>
<feature type="binding site" evidence="1">
    <location>
        <position position="232"/>
    </location>
    <ligand>
        <name>Mg(2+)</name>
        <dbReference type="ChEBI" id="CHEBI:18420"/>
    </ligand>
</feature>
<feature type="binding site" evidence="1">
    <location>
        <begin position="247"/>
        <end position="253"/>
    </location>
    <ligand>
        <name>GTP</name>
        <dbReference type="ChEBI" id="CHEBI:37565"/>
    </ligand>
</feature>
<feature type="binding site" evidence="1">
    <location>
        <position position="247"/>
    </location>
    <ligand>
        <name>K(+)</name>
        <dbReference type="ChEBI" id="CHEBI:29103"/>
    </ligand>
</feature>
<feature type="binding site" evidence="1">
    <location>
        <position position="249"/>
    </location>
    <ligand>
        <name>K(+)</name>
        <dbReference type="ChEBI" id="CHEBI:29103"/>
    </ligand>
</feature>
<feature type="binding site" evidence="1">
    <location>
        <position position="252"/>
    </location>
    <ligand>
        <name>K(+)</name>
        <dbReference type="ChEBI" id="CHEBI:29103"/>
    </ligand>
</feature>
<feature type="binding site" evidence="1">
    <location>
        <position position="253"/>
    </location>
    <ligand>
        <name>Mg(2+)</name>
        <dbReference type="ChEBI" id="CHEBI:18420"/>
    </ligand>
</feature>
<feature type="binding site" evidence="1">
    <location>
        <begin position="272"/>
        <end position="275"/>
    </location>
    <ligand>
        <name>GTP</name>
        <dbReference type="ChEBI" id="CHEBI:37565"/>
    </ligand>
</feature>
<feature type="binding site" evidence="1">
    <location>
        <begin position="326"/>
        <end position="329"/>
    </location>
    <ligand>
        <name>GTP</name>
        <dbReference type="ChEBI" id="CHEBI:37565"/>
    </ligand>
</feature>
<feature type="binding site" evidence="1">
    <location>
        <position position="441"/>
    </location>
    <ligand>
        <name>(6S)-5-formyl-5,6,7,8-tetrahydrofolate</name>
        <dbReference type="ChEBI" id="CHEBI:57457"/>
    </ligand>
</feature>
<comment type="function">
    <text evidence="1">Exhibits a very high intrinsic GTPase hydrolysis rate. Involved in the addition of a carboxymethylaminomethyl (cmnm) group at the wobble position (U34) of certain tRNAs, forming tRNA-cmnm(5)s(2)U34.</text>
</comment>
<comment type="cofactor">
    <cofactor evidence="1">
        <name>K(+)</name>
        <dbReference type="ChEBI" id="CHEBI:29103"/>
    </cofactor>
    <text evidence="1">Binds 1 potassium ion per subunit.</text>
</comment>
<comment type="subunit">
    <text evidence="1">Homodimer. Heterotetramer of two MnmE and two MnmG subunits.</text>
</comment>
<comment type="subcellular location">
    <subcellularLocation>
        <location evidence="1">Cytoplasm</location>
    </subcellularLocation>
</comment>
<comment type="similarity">
    <text evidence="1">Belongs to the TRAFAC class TrmE-Era-EngA-EngB-Septin-like GTPase superfamily. TrmE GTPase family.</text>
</comment>
<evidence type="ECO:0000255" key="1">
    <source>
        <dbReference type="HAMAP-Rule" id="MF_00379"/>
    </source>
</evidence>
<organism>
    <name type="scientific">Hyphomonas neptunium (strain ATCC 15444)</name>
    <dbReference type="NCBI Taxonomy" id="228405"/>
    <lineage>
        <taxon>Bacteria</taxon>
        <taxon>Pseudomonadati</taxon>
        <taxon>Pseudomonadota</taxon>
        <taxon>Alphaproteobacteria</taxon>
        <taxon>Hyphomonadales</taxon>
        <taxon>Hyphomonadaceae</taxon>
        <taxon>Hyphomonas</taxon>
    </lineage>
</organism>
<keyword id="KW-0963">Cytoplasm</keyword>
<keyword id="KW-0342">GTP-binding</keyword>
<keyword id="KW-0378">Hydrolase</keyword>
<keyword id="KW-0460">Magnesium</keyword>
<keyword id="KW-0479">Metal-binding</keyword>
<keyword id="KW-0547">Nucleotide-binding</keyword>
<keyword id="KW-0630">Potassium</keyword>
<keyword id="KW-1185">Reference proteome</keyword>
<keyword id="KW-0819">tRNA processing</keyword>
<dbReference type="EC" id="3.6.-.-" evidence="1"/>
<dbReference type="EMBL" id="CP000158">
    <property type="protein sequence ID" value="ABI77924.1"/>
    <property type="molecule type" value="Genomic_DNA"/>
</dbReference>
<dbReference type="RefSeq" id="WP_011648529.1">
    <property type="nucleotide sequence ID" value="NC_008358.1"/>
</dbReference>
<dbReference type="SMR" id="Q0BWA8"/>
<dbReference type="STRING" id="228405.HNE_3564"/>
<dbReference type="KEGG" id="hne:HNE_3564"/>
<dbReference type="eggNOG" id="COG0486">
    <property type="taxonomic scope" value="Bacteria"/>
</dbReference>
<dbReference type="HOGENOM" id="CLU_019624_3_1_5"/>
<dbReference type="Proteomes" id="UP000001959">
    <property type="component" value="Chromosome"/>
</dbReference>
<dbReference type="GO" id="GO:0005737">
    <property type="term" value="C:cytoplasm"/>
    <property type="evidence" value="ECO:0007669"/>
    <property type="project" value="UniProtKB-SubCell"/>
</dbReference>
<dbReference type="GO" id="GO:0005525">
    <property type="term" value="F:GTP binding"/>
    <property type="evidence" value="ECO:0007669"/>
    <property type="project" value="UniProtKB-UniRule"/>
</dbReference>
<dbReference type="GO" id="GO:0003924">
    <property type="term" value="F:GTPase activity"/>
    <property type="evidence" value="ECO:0007669"/>
    <property type="project" value="UniProtKB-UniRule"/>
</dbReference>
<dbReference type="GO" id="GO:0046872">
    <property type="term" value="F:metal ion binding"/>
    <property type="evidence" value="ECO:0007669"/>
    <property type="project" value="UniProtKB-KW"/>
</dbReference>
<dbReference type="GO" id="GO:0030488">
    <property type="term" value="P:tRNA methylation"/>
    <property type="evidence" value="ECO:0007669"/>
    <property type="project" value="TreeGrafter"/>
</dbReference>
<dbReference type="GO" id="GO:0002098">
    <property type="term" value="P:tRNA wobble uridine modification"/>
    <property type="evidence" value="ECO:0007669"/>
    <property type="project" value="TreeGrafter"/>
</dbReference>
<dbReference type="CDD" id="cd04164">
    <property type="entry name" value="trmE"/>
    <property type="match status" value="1"/>
</dbReference>
<dbReference type="CDD" id="cd14858">
    <property type="entry name" value="TrmE_N"/>
    <property type="match status" value="1"/>
</dbReference>
<dbReference type="FunFam" id="3.30.1360.120:FF:000007">
    <property type="entry name" value="tRNA modification GTPase GTPBP3, mitochondrial"/>
    <property type="match status" value="1"/>
</dbReference>
<dbReference type="Gene3D" id="3.40.50.300">
    <property type="entry name" value="P-loop containing nucleotide triphosphate hydrolases"/>
    <property type="match status" value="1"/>
</dbReference>
<dbReference type="Gene3D" id="3.30.1360.120">
    <property type="entry name" value="Probable tRNA modification gtpase trme, domain 1"/>
    <property type="match status" value="1"/>
</dbReference>
<dbReference type="Gene3D" id="1.20.120.430">
    <property type="entry name" value="tRNA modification GTPase MnmE domain 2"/>
    <property type="match status" value="1"/>
</dbReference>
<dbReference type="HAMAP" id="MF_00379">
    <property type="entry name" value="GTPase_MnmE"/>
    <property type="match status" value="1"/>
</dbReference>
<dbReference type="InterPro" id="IPR031168">
    <property type="entry name" value="G_TrmE"/>
</dbReference>
<dbReference type="InterPro" id="IPR006073">
    <property type="entry name" value="GTP-bd"/>
</dbReference>
<dbReference type="InterPro" id="IPR018948">
    <property type="entry name" value="GTP-bd_TrmE_N"/>
</dbReference>
<dbReference type="InterPro" id="IPR004520">
    <property type="entry name" value="GTPase_MnmE"/>
</dbReference>
<dbReference type="InterPro" id="IPR027368">
    <property type="entry name" value="MnmE_dom2"/>
</dbReference>
<dbReference type="InterPro" id="IPR025867">
    <property type="entry name" value="MnmE_helical"/>
</dbReference>
<dbReference type="InterPro" id="IPR027417">
    <property type="entry name" value="P-loop_NTPase"/>
</dbReference>
<dbReference type="InterPro" id="IPR005225">
    <property type="entry name" value="Small_GTP-bd"/>
</dbReference>
<dbReference type="InterPro" id="IPR027266">
    <property type="entry name" value="TrmE/GcvT_dom1"/>
</dbReference>
<dbReference type="NCBIfam" id="TIGR00450">
    <property type="entry name" value="mnmE_trmE_thdF"/>
    <property type="match status" value="1"/>
</dbReference>
<dbReference type="NCBIfam" id="NF003661">
    <property type="entry name" value="PRK05291.1-3"/>
    <property type="match status" value="1"/>
</dbReference>
<dbReference type="NCBIfam" id="TIGR00231">
    <property type="entry name" value="small_GTP"/>
    <property type="match status" value="1"/>
</dbReference>
<dbReference type="PANTHER" id="PTHR42714">
    <property type="entry name" value="TRNA MODIFICATION GTPASE GTPBP3"/>
    <property type="match status" value="1"/>
</dbReference>
<dbReference type="PANTHER" id="PTHR42714:SF2">
    <property type="entry name" value="TRNA MODIFICATION GTPASE GTPBP3, MITOCHONDRIAL"/>
    <property type="match status" value="1"/>
</dbReference>
<dbReference type="Pfam" id="PF01926">
    <property type="entry name" value="MMR_HSR1"/>
    <property type="match status" value="1"/>
</dbReference>
<dbReference type="Pfam" id="PF12631">
    <property type="entry name" value="MnmE_helical"/>
    <property type="match status" value="1"/>
</dbReference>
<dbReference type="Pfam" id="PF10396">
    <property type="entry name" value="TrmE_N"/>
    <property type="match status" value="1"/>
</dbReference>
<dbReference type="SUPFAM" id="SSF52540">
    <property type="entry name" value="P-loop containing nucleoside triphosphate hydrolases"/>
    <property type="match status" value="1"/>
</dbReference>
<dbReference type="SUPFAM" id="SSF116878">
    <property type="entry name" value="TrmE connector domain"/>
    <property type="match status" value="1"/>
</dbReference>
<dbReference type="PROSITE" id="PS51709">
    <property type="entry name" value="G_TRME"/>
    <property type="match status" value="1"/>
</dbReference>
<protein>
    <recommendedName>
        <fullName evidence="1">tRNA modification GTPase MnmE</fullName>
        <ecNumber evidence="1">3.6.-.-</ecNumber>
    </recommendedName>
</protein>
<gene>
    <name evidence="1" type="primary">mnmE</name>
    <name evidence="1" type="synonym">trmE</name>
    <name type="ordered locus">HNE_3564</name>
</gene>
<proteinExistence type="inferred from homology"/>
<name>MNME_HYPNA</name>
<accession>Q0BWA8</accession>